<sequence>MSAILSADDLNDFISPGVACIKPIETLPTQPGPEQSQQPQSLEFEVILDGQQPTTGSSSNGTTPPAQISLTDCLACSGCVTSAEAVLVSLQSHNEVLTLLDAAPALRVIQDSDGKPVVSGLENPEAKLFVASVSPQTRASLAAACGGAVTEQQAGWMIEQLLMGPAGLAGGGKHGNGFTWVVDTNTAREACLMLGSDEVLGGGSWGGSDKPTSPILTSSCPGWVCYAEKTHPYVLPHLSRVKSPQALMGTLLKTTLSRVLGIAPDRVWHLAVMPCFDKKLEASREELTDTAWGSGGVPGRGVRDVDCVITSKEILMLAASKGVDFFGLAKSAPVKQPMFPDSDIHRFLFPAQRRKQLRDGGTSGGNLHYIIQDVLSKHAGSQIQMTRGRNADVVEFAVLSSSGETIFKAARYYGFRNIQNLVRKLKPAKASRMPGGKPFGSARRPAGKSATLEHSYVEVMACPGGCTNGGGQIKVDDQVVIDRKNFGEKPGPDEQKAWQAEVDEAYFSGDESDPAQGAGDDQSMELIAGISPSYIRDTLAHWADITGIQLDKLVYTSYREVVSDVGKPISDTERVVQLAGKIGGGW</sequence>
<name>NAR1_CHAGB</name>
<accession>Q2HEF1</accession>
<dbReference type="EMBL" id="CH408029">
    <property type="protein sequence ID" value="EAQ93168.1"/>
    <property type="molecule type" value="Genomic_DNA"/>
</dbReference>
<dbReference type="RefSeq" id="XP_001220624.1">
    <property type="nucleotide sequence ID" value="XM_001220623.1"/>
</dbReference>
<dbReference type="SMR" id="Q2HEF1"/>
<dbReference type="FunCoup" id="Q2HEF1">
    <property type="interactions" value="332"/>
</dbReference>
<dbReference type="STRING" id="306901.Q2HEF1"/>
<dbReference type="GeneID" id="4387726"/>
<dbReference type="VEuPathDB" id="FungiDB:CHGG_01403"/>
<dbReference type="eggNOG" id="KOG2439">
    <property type="taxonomic scope" value="Eukaryota"/>
</dbReference>
<dbReference type="HOGENOM" id="CLU_018240_0_1_1"/>
<dbReference type="InParanoid" id="Q2HEF1"/>
<dbReference type="OMA" id="GYLHHVL"/>
<dbReference type="OrthoDB" id="10253113at2759"/>
<dbReference type="Proteomes" id="UP000001056">
    <property type="component" value="Unassembled WGS sequence"/>
</dbReference>
<dbReference type="GO" id="GO:0051539">
    <property type="term" value="F:4 iron, 4 sulfur cluster binding"/>
    <property type="evidence" value="ECO:0007669"/>
    <property type="project" value="UniProtKB-KW"/>
</dbReference>
<dbReference type="GO" id="GO:0051536">
    <property type="term" value="F:iron-sulfur cluster binding"/>
    <property type="evidence" value="ECO:0000250"/>
    <property type="project" value="UniProtKB"/>
</dbReference>
<dbReference type="GO" id="GO:0046872">
    <property type="term" value="F:metal ion binding"/>
    <property type="evidence" value="ECO:0007669"/>
    <property type="project" value="UniProtKB-KW"/>
</dbReference>
<dbReference type="GO" id="GO:0016226">
    <property type="term" value="P:iron-sulfur cluster assembly"/>
    <property type="evidence" value="ECO:0000250"/>
    <property type="project" value="UniProtKB"/>
</dbReference>
<dbReference type="FunFam" id="3.40.50.1780:FF:000004">
    <property type="entry name" value="Cytosolic Fe-S cluster assembly factor nar1"/>
    <property type="match status" value="1"/>
</dbReference>
<dbReference type="Gene3D" id="3.40.50.1780">
    <property type="match status" value="1"/>
</dbReference>
<dbReference type="Gene3D" id="3.40.950.10">
    <property type="entry name" value="Fe-only Hydrogenase (Larger Subunit), Chain L, domain 3"/>
    <property type="match status" value="1"/>
</dbReference>
<dbReference type="InterPro" id="IPR050340">
    <property type="entry name" value="Cytosolic_Fe-S_CAF"/>
</dbReference>
<dbReference type="InterPro" id="IPR009016">
    <property type="entry name" value="Fe_hydrogenase"/>
</dbReference>
<dbReference type="InterPro" id="IPR004108">
    <property type="entry name" value="Fe_hydrogenase_lsu_C"/>
</dbReference>
<dbReference type="PANTHER" id="PTHR11615">
    <property type="entry name" value="NITRATE, FORMATE, IRON DEHYDROGENASE"/>
    <property type="match status" value="1"/>
</dbReference>
<dbReference type="Pfam" id="PF02906">
    <property type="entry name" value="Fe_hyd_lg_C"/>
    <property type="match status" value="1"/>
</dbReference>
<dbReference type="SUPFAM" id="SSF53920">
    <property type="entry name" value="Fe-only hydrogenase"/>
    <property type="match status" value="1"/>
</dbReference>
<proteinExistence type="inferred from homology"/>
<keyword id="KW-0004">4Fe-4S</keyword>
<keyword id="KW-0408">Iron</keyword>
<keyword id="KW-0411">Iron-sulfur</keyword>
<keyword id="KW-0479">Metal-binding</keyword>
<keyword id="KW-1185">Reference proteome</keyword>
<reference key="1">
    <citation type="journal article" date="2015" name="Genome Announc.">
        <title>Draft genome sequence of the cellulolytic fungus Chaetomium globosum.</title>
        <authorList>
            <person name="Cuomo C.A."/>
            <person name="Untereiner W.A."/>
            <person name="Ma L.-J."/>
            <person name="Grabherr M."/>
            <person name="Birren B.W."/>
        </authorList>
    </citation>
    <scope>NUCLEOTIDE SEQUENCE [LARGE SCALE GENOMIC DNA]</scope>
    <source>
        <strain>ATCC 6205 / CBS 148.51 / DSM 1962 / NBRC 6347 / NRRL 1970</strain>
    </source>
</reference>
<evidence type="ECO:0000250" key="1"/>
<evidence type="ECO:0000255" key="2"/>
<evidence type="ECO:0000305" key="3"/>
<protein>
    <recommendedName>
        <fullName>Cytosolic Fe-S cluster assembly factor NAR1</fullName>
    </recommendedName>
    <alternativeName>
        <fullName>Nuclear architecture-related protein 1</fullName>
    </alternativeName>
</protein>
<organism>
    <name type="scientific">Chaetomium globosum (strain ATCC 6205 / CBS 148.51 / DSM 1962 / NBRC 6347 / NRRL 1970)</name>
    <name type="common">Soil fungus</name>
    <dbReference type="NCBI Taxonomy" id="306901"/>
    <lineage>
        <taxon>Eukaryota</taxon>
        <taxon>Fungi</taxon>
        <taxon>Dikarya</taxon>
        <taxon>Ascomycota</taxon>
        <taxon>Pezizomycotina</taxon>
        <taxon>Sordariomycetes</taxon>
        <taxon>Sordariomycetidae</taxon>
        <taxon>Sordariales</taxon>
        <taxon>Chaetomiaceae</taxon>
        <taxon>Chaetomium</taxon>
    </lineage>
</organism>
<comment type="function">
    <text evidence="1">Component of the cytosolic Fe/S protein assembly machinery. Required for maturation of extramitochondrial Fe/S proteins. May play a role in the transfer of pre-assembled Fe/S clusters to target apoproteins (By similarity).</text>
</comment>
<comment type="similarity">
    <text evidence="3">Belongs to the NARF family.</text>
</comment>
<gene>
    <name type="primary">NAR1</name>
    <name type="ORF">CHGG_01403</name>
</gene>
<feature type="chain" id="PRO_0000383724" description="Cytosolic Fe-S cluster assembly factor NAR1">
    <location>
        <begin position="1"/>
        <end position="586"/>
    </location>
</feature>
<feature type="binding site" evidence="2">
    <location>
        <position position="20"/>
    </location>
    <ligand>
        <name>[4Fe-4S] cluster</name>
        <dbReference type="ChEBI" id="CHEBI:49883"/>
        <label>1</label>
    </ligand>
</feature>
<feature type="binding site" evidence="2">
    <location>
        <position position="73"/>
    </location>
    <ligand>
        <name>[4Fe-4S] cluster</name>
        <dbReference type="ChEBI" id="CHEBI:49883"/>
        <label>1</label>
    </ligand>
</feature>
<feature type="binding site" evidence="2">
    <location>
        <position position="76"/>
    </location>
    <ligand>
        <name>[4Fe-4S] cluster</name>
        <dbReference type="ChEBI" id="CHEBI:49883"/>
        <label>1</label>
    </ligand>
</feature>
<feature type="binding site" evidence="2">
    <location>
        <position position="79"/>
    </location>
    <ligand>
        <name>[4Fe-4S] cluster</name>
        <dbReference type="ChEBI" id="CHEBI:49883"/>
        <label>1</label>
    </ligand>
</feature>
<feature type="binding site" evidence="2">
    <location>
        <position position="220"/>
    </location>
    <ligand>
        <name>[4Fe-4S] cluster</name>
        <dbReference type="ChEBI" id="CHEBI:49883"/>
        <label>2</label>
    </ligand>
</feature>
<feature type="binding site" evidence="2">
    <location>
        <position position="275"/>
    </location>
    <ligand>
        <name>[4Fe-4S] cluster</name>
        <dbReference type="ChEBI" id="CHEBI:49883"/>
        <label>2</label>
    </ligand>
</feature>
<feature type="binding site" evidence="2">
    <location>
        <position position="462"/>
    </location>
    <ligand>
        <name>[4Fe-4S] cluster</name>
        <dbReference type="ChEBI" id="CHEBI:49883"/>
        <label>2</label>
    </ligand>
</feature>
<feature type="binding site" evidence="2">
    <location>
        <position position="466"/>
    </location>
    <ligand>
        <name>[4Fe-4S] cluster</name>
        <dbReference type="ChEBI" id="CHEBI:49883"/>
        <label>2</label>
    </ligand>
</feature>